<protein>
    <recommendedName>
        <fullName>Hemolysin</fullName>
    </recommendedName>
</protein>
<proteinExistence type="inferred from homology"/>
<accession>Q45105</accession>
<dbReference type="EMBL" id="D21270">
    <property type="protein sequence ID" value="BAA04808.1"/>
    <property type="molecule type" value="Genomic_DNA"/>
</dbReference>
<dbReference type="PIR" id="I39863">
    <property type="entry name" value="I39863"/>
</dbReference>
<dbReference type="SMR" id="Q45105"/>
<dbReference type="eggNOG" id="ENOG502Z7ST">
    <property type="taxonomic scope" value="Bacteria"/>
</dbReference>
<dbReference type="GO" id="GO:0005576">
    <property type="term" value="C:extracellular region"/>
    <property type="evidence" value="ECO:0007669"/>
    <property type="project" value="UniProtKB-SubCell"/>
</dbReference>
<dbReference type="GO" id="GO:0020002">
    <property type="term" value="C:host cell plasma membrane"/>
    <property type="evidence" value="ECO:0007669"/>
    <property type="project" value="UniProtKB-SubCell"/>
</dbReference>
<dbReference type="GO" id="GO:0016020">
    <property type="term" value="C:membrane"/>
    <property type="evidence" value="ECO:0007669"/>
    <property type="project" value="UniProtKB-KW"/>
</dbReference>
<dbReference type="GO" id="GO:0015485">
    <property type="term" value="F:cholesterol binding"/>
    <property type="evidence" value="ECO:0007669"/>
    <property type="project" value="InterPro"/>
</dbReference>
<dbReference type="GO" id="GO:0090729">
    <property type="term" value="F:toxin activity"/>
    <property type="evidence" value="ECO:0007669"/>
    <property type="project" value="UniProtKB-KW"/>
</dbReference>
<dbReference type="GO" id="GO:0031640">
    <property type="term" value="P:killing of cells of another organism"/>
    <property type="evidence" value="ECO:0007669"/>
    <property type="project" value="UniProtKB-KW"/>
</dbReference>
<dbReference type="Gene3D" id="3.30.1040.20">
    <property type="match status" value="1"/>
</dbReference>
<dbReference type="Gene3D" id="3.40.30.40">
    <property type="entry name" value="Perfringolysin"/>
    <property type="match status" value="1"/>
</dbReference>
<dbReference type="Gene3D" id="2.60.40.1430">
    <property type="entry name" value="Perfringolysin, domain 4"/>
    <property type="match status" value="1"/>
</dbReference>
<dbReference type="Gene3D" id="3.90.840.10">
    <property type="entry name" value="Thiol-activated cytolysin superfamily/Thiol-activated cytolysin, alpha-beta domain"/>
    <property type="match status" value="1"/>
</dbReference>
<dbReference type="InterPro" id="IPR035390">
    <property type="entry name" value="Thiol_cytolys_C"/>
</dbReference>
<dbReference type="InterPro" id="IPR038700">
    <property type="entry name" value="Thiol_cytolys_C_sf"/>
</dbReference>
<dbReference type="InterPro" id="IPR001869">
    <property type="entry name" value="Thiol_cytolysin"/>
</dbReference>
<dbReference type="InterPro" id="IPR036363">
    <property type="entry name" value="Thiol_cytolysin_ab_sf"/>
</dbReference>
<dbReference type="InterPro" id="IPR036359">
    <property type="entry name" value="Thiol_cytolysin_sf"/>
</dbReference>
<dbReference type="Pfam" id="PF17440">
    <property type="entry name" value="Thiol_cytolys_C"/>
    <property type="match status" value="1"/>
</dbReference>
<dbReference type="Pfam" id="PF01289">
    <property type="entry name" value="Thiol_cytolysin"/>
    <property type="match status" value="1"/>
</dbReference>
<dbReference type="PRINTS" id="PR01400">
    <property type="entry name" value="TACYTOLYSIN"/>
</dbReference>
<dbReference type="SUPFAM" id="SSF56978">
    <property type="entry name" value="Perfringolysin"/>
    <property type="match status" value="1"/>
</dbReference>
<dbReference type="PROSITE" id="PS00481">
    <property type="entry name" value="THIOL_CYTOLYSINS"/>
    <property type="match status" value="1"/>
</dbReference>
<evidence type="ECO:0000250" key="1">
    <source>
        <dbReference type="UniProtKB" id="P13128"/>
    </source>
</evidence>
<evidence type="ECO:0000250" key="2">
    <source>
        <dbReference type="UniProtKB" id="Q04IN8"/>
    </source>
</evidence>
<evidence type="ECO:0000255" key="3"/>
<evidence type="ECO:0000305" key="4"/>
<organism>
    <name type="scientific">Bacillus cereus</name>
    <dbReference type="NCBI Taxonomy" id="1396"/>
    <lineage>
        <taxon>Bacteria</taxon>
        <taxon>Bacillati</taxon>
        <taxon>Bacillota</taxon>
        <taxon>Bacilli</taxon>
        <taxon>Bacillales</taxon>
        <taxon>Bacillaceae</taxon>
        <taxon>Bacillus</taxon>
        <taxon>Bacillus cereus group</taxon>
    </lineage>
</organism>
<keyword id="KW-0204">Cytolysis</keyword>
<keyword id="KW-0354">Hemolysis</keyword>
<keyword id="KW-1032">Host cell membrane</keyword>
<keyword id="KW-1043">Host membrane</keyword>
<keyword id="KW-0446">Lipid-binding</keyword>
<keyword id="KW-0472">Membrane</keyword>
<keyword id="KW-0964">Secreted</keyword>
<keyword id="KW-0732">Signal</keyword>
<keyword id="KW-0800">Toxin</keyword>
<keyword id="KW-0812">Transmembrane</keyword>
<keyword id="KW-1134">Transmembrane beta strand</keyword>
<keyword id="KW-0843">Virulence</keyword>
<reference key="1">
    <citation type="journal article" date="1994" name="Infect. Immun.">
        <title>The gene encoding a new mitogenic factor in a Streptococcus pyogenes strain is distributed only in group A streptococci.</title>
        <authorList>
            <person name="Yutsudo T."/>
            <person name="Okumura K."/>
            <person name="Iwasaki M."/>
            <person name="Hara A."/>
            <person name="Kamitani S."/>
            <person name="Minamide W."/>
            <person name="Igarashi H."/>
            <person name="Hinuma Y."/>
        </authorList>
    </citation>
    <scope>NUCLEOTIDE SEQUENCE [GENOMIC DNA]</scope>
    <source>
        <strain>RIMD 206001</strain>
    </source>
</reference>
<comment type="function">
    <text evidence="1">A cholesterol-dependent toxin with hemolytic activity against host red blood cells. Causes cytolysis by forming pores in cholesterol containing host membranes. binding to target membranes, the protein undergoes a major conformation change, leading to its insertion in the host membrane and formation of an oligomeric pore complex. Cholesterol is required for binding to host membranes, membrane insertion and pore formation; cholesterol binding is mediated by a Thr-Leu pair in the C-terminus. Can be reversibly inactivated by oxidation.</text>
</comment>
<comment type="subunit">
    <text evidence="2">Homooligomeric pore complex of 35 to 50 subunits; when inserted in the host membrane.</text>
</comment>
<comment type="subcellular location">
    <subcellularLocation>
        <location evidence="1">Secreted</location>
    </subcellularLocation>
    <subcellularLocation>
        <location evidence="1">Host cell membrane</location>
        <topology evidence="2">Multi-pass membrane protein</topology>
    </subcellularLocation>
    <text evidence="2">Secreted as soluble protein that then inserts into the host cell membrane and forms pores formed by transmembrane beta-strands.</text>
</comment>
<comment type="similarity">
    <text evidence="4">Belongs to the cholesterol-dependent cytolysin family.</text>
</comment>
<feature type="signal peptide" evidence="3">
    <location>
        <begin position="1"/>
        <end position="28"/>
    </location>
</feature>
<feature type="chain" id="PRO_0000034111" description="Hemolysin">
    <location>
        <begin position="29"/>
        <end position="485" status="greater than"/>
    </location>
</feature>
<feature type="transmembrane region" description="Beta stranded" evidence="2">
    <location>
        <begin position="196"/>
        <end position="209"/>
    </location>
</feature>
<feature type="transmembrane region" description="Beta stranded" evidence="2">
    <location>
        <begin position="216"/>
        <end position="225"/>
    </location>
</feature>
<feature type="transmembrane region" description="Beta stranded" evidence="2">
    <location>
        <begin position="294"/>
        <end position="303"/>
    </location>
</feature>
<feature type="transmembrane region" description="Beta stranded" evidence="2">
    <location>
        <begin position="311"/>
        <end position="323"/>
    </location>
</feature>
<feature type="short sequence motif" description="Conserved undecapeptide" evidence="4">
    <location>
        <begin position="465"/>
        <end position="475"/>
    </location>
</feature>
<feature type="non-terminal residue">
    <location>
        <position position="485"/>
    </location>
</feature>
<name>TACY_BACCE</name>
<sequence length="485" mass="53863">MKNFKGRKFLTCVLVSLCTLNYSSISFAETQAGHANDITKNASSIDTGIGNLTYNNQEVLAVNGDKVESFVPKESINSNGKFVVVDVRKNHLQRHQSIFRLLDSVANRTYPGAVQLANKAFADNQPSLLVAKRKPLNISIDLPGMRKENTITVQNPTYGNVAGAVDDLVSTWNEKYSATHTLPARMQYTESMVYSKAQIASALNVNAKYLDNSLNIDFNAVANGEKKVMVAAYKQIFYTVSAELPNNPSDLFDNSVTFGELTRKGVSNSAPPVMVSNVAYGRTVYVKLETTSKSKDVQAAFKALLKNNSVETSGQYKDIFEESTFTAVVLGGDAKEHNKVVTKDFNEIRNIIKDNAELSFKNPAYPISYTSTFLKDNATAAVHNNTDYIETTTTEYSSAKMTLDHYGAYVAQFDVSWDGFTFDQNGKEILTHKTWEGSGKDKTAHYSTVIPLPPNSKNIKIVARECTGLAWEWWRTIIKMNKMFH</sequence>